<feature type="chain" id="PRO_1000114916" description="Phenylalanine--tRNA ligase alpha subunit">
    <location>
        <begin position="1"/>
        <end position="327"/>
    </location>
</feature>
<feature type="binding site" evidence="1">
    <location>
        <position position="252"/>
    </location>
    <ligand>
        <name>Mg(2+)</name>
        <dbReference type="ChEBI" id="CHEBI:18420"/>
        <note>shared with beta subunit</note>
    </ligand>
</feature>
<comment type="catalytic activity">
    <reaction evidence="1">
        <text>tRNA(Phe) + L-phenylalanine + ATP = L-phenylalanyl-tRNA(Phe) + AMP + diphosphate + H(+)</text>
        <dbReference type="Rhea" id="RHEA:19413"/>
        <dbReference type="Rhea" id="RHEA-COMP:9668"/>
        <dbReference type="Rhea" id="RHEA-COMP:9699"/>
        <dbReference type="ChEBI" id="CHEBI:15378"/>
        <dbReference type="ChEBI" id="CHEBI:30616"/>
        <dbReference type="ChEBI" id="CHEBI:33019"/>
        <dbReference type="ChEBI" id="CHEBI:58095"/>
        <dbReference type="ChEBI" id="CHEBI:78442"/>
        <dbReference type="ChEBI" id="CHEBI:78531"/>
        <dbReference type="ChEBI" id="CHEBI:456215"/>
        <dbReference type="EC" id="6.1.1.20"/>
    </reaction>
</comment>
<comment type="cofactor">
    <cofactor evidence="1">
        <name>Mg(2+)</name>
        <dbReference type="ChEBI" id="CHEBI:18420"/>
    </cofactor>
    <text evidence="1">Binds 2 magnesium ions per tetramer.</text>
</comment>
<comment type="subunit">
    <text evidence="1">Tetramer of two alpha and two beta subunits.</text>
</comment>
<comment type="subcellular location">
    <subcellularLocation>
        <location evidence="1">Cytoplasm</location>
    </subcellularLocation>
</comment>
<comment type="similarity">
    <text evidence="1">Belongs to the class-II aminoacyl-tRNA synthetase family. Phe-tRNA synthetase alpha subunit type 1 subfamily.</text>
</comment>
<reference key="1">
    <citation type="submission" date="2008-02" db="EMBL/GenBank/DDBJ databases">
        <title>Complete sequence of Shewanella woodyi ATCC 51908.</title>
        <authorList>
            <consortium name="US DOE Joint Genome Institute"/>
            <person name="Copeland A."/>
            <person name="Lucas S."/>
            <person name="Lapidus A."/>
            <person name="Glavina del Rio T."/>
            <person name="Dalin E."/>
            <person name="Tice H."/>
            <person name="Bruce D."/>
            <person name="Goodwin L."/>
            <person name="Pitluck S."/>
            <person name="Sims D."/>
            <person name="Brettin T."/>
            <person name="Detter J.C."/>
            <person name="Han C."/>
            <person name="Kuske C.R."/>
            <person name="Schmutz J."/>
            <person name="Larimer F."/>
            <person name="Land M."/>
            <person name="Hauser L."/>
            <person name="Kyrpides N."/>
            <person name="Lykidis A."/>
            <person name="Zhao J.-S."/>
            <person name="Richardson P."/>
        </authorList>
    </citation>
    <scope>NUCLEOTIDE SEQUENCE [LARGE SCALE GENOMIC DNA]</scope>
    <source>
        <strain>ATCC 51908 / MS32</strain>
    </source>
</reference>
<dbReference type="EC" id="6.1.1.20" evidence="1"/>
<dbReference type="EMBL" id="CP000961">
    <property type="protein sequence ID" value="ACA86350.1"/>
    <property type="molecule type" value="Genomic_DNA"/>
</dbReference>
<dbReference type="RefSeq" id="WP_012324695.1">
    <property type="nucleotide sequence ID" value="NC_010506.1"/>
</dbReference>
<dbReference type="SMR" id="B1KRE3"/>
<dbReference type="STRING" id="392500.Swoo_2066"/>
<dbReference type="KEGG" id="swd:Swoo_2066"/>
<dbReference type="eggNOG" id="COG0016">
    <property type="taxonomic scope" value="Bacteria"/>
</dbReference>
<dbReference type="HOGENOM" id="CLU_025086_0_1_6"/>
<dbReference type="Proteomes" id="UP000002168">
    <property type="component" value="Chromosome"/>
</dbReference>
<dbReference type="GO" id="GO:0005737">
    <property type="term" value="C:cytoplasm"/>
    <property type="evidence" value="ECO:0007669"/>
    <property type="project" value="UniProtKB-SubCell"/>
</dbReference>
<dbReference type="GO" id="GO:0005524">
    <property type="term" value="F:ATP binding"/>
    <property type="evidence" value="ECO:0007669"/>
    <property type="project" value="UniProtKB-UniRule"/>
</dbReference>
<dbReference type="GO" id="GO:0000287">
    <property type="term" value="F:magnesium ion binding"/>
    <property type="evidence" value="ECO:0007669"/>
    <property type="project" value="UniProtKB-UniRule"/>
</dbReference>
<dbReference type="GO" id="GO:0004826">
    <property type="term" value="F:phenylalanine-tRNA ligase activity"/>
    <property type="evidence" value="ECO:0007669"/>
    <property type="project" value="UniProtKB-UniRule"/>
</dbReference>
<dbReference type="GO" id="GO:0000049">
    <property type="term" value="F:tRNA binding"/>
    <property type="evidence" value="ECO:0007669"/>
    <property type="project" value="InterPro"/>
</dbReference>
<dbReference type="GO" id="GO:0006432">
    <property type="term" value="P:phenylalanyl-tRNA aminoacylation"/>
    <property type="evidence" value="ECO:0007669"/>
    <property type="project" value="UniProtKB-UniRule"/>
</dbReference>
<dbReference type="CDD" id="cd00496">
    <property type="entry name" value="PheRS_alpha_core"/>
    <property type="match status" value="1"/>
</dbReference>
<dbReference type="FunFam" id="3.30.930.10:FF:000003">
    <property type="entry name" value="Phenylalanine--tRNA ligase alpha subunit"/>
    <property type="match status" value="1"/>
</dbReference>
<dbReference type="Gene3D" id="3.30.930.10">
    <property type="entry name" value="Bira Bifunctional Protein, Domain 2"/>
    <property type="match status" value="1"/>
</dbReference>
<dbReference type="HAMAP" id="MF_00281">
    <property type="entry name" value="Phe_tRNA_synth_alpha1"/>
    <property type="match status" value="1"/>
</dbReference>
<dbReference type="InterPro" id="IPR006195">
    <property type="entry name" value="aa-tRNA-synth_II"/>
</dbReference>
<dbReference type="InterPro" id="IPR045864">
    <property type="entry name" value="aa-tRNA-synth_II/BPL/LPL"/>
</dbReference>
<dbReference type="InterPro" id="IPR004529">
    <property type="entry name" value="Phe-tRNA-synth_IIc_asu"/>
</dbReference>
<dbReference type="InterPro" id="IPR004188">
    <property type="entry name" value="Phe-tRNA_ligase_II_N"/>
</dbReference>
<dbReference type="InterPro" id="IPR022911">
    <property type="entry name" value="Phe_tRNA_ligase_alpha1_bac"/>
</dbReference>
<dbReference type="InterPro" id="IPR002319">
    <property type="entry name" value="Phenylalanyl-tRNA_Synthase"/>
</dbReference>
<dbReference type="InterPro" id="IPR010978">
    <property type="entry name" value="tRNA-bd_arm"/>
</dbReference>
<dbReference type="NCBIfam" id="TIGR00468">
    <property type="entry name" value="pheS"/>
    <property type="match status" value="1"/>
</dbReference>
<dbReference type="PANTHER" id="PTHR11538:SF41">
    <property type="entry name" value="PHENYLALANINE--TRNA LIGASE, MITOCHONDRIAL"/>
    <property type="match status" value="1"/>
</dbReference>
<dbReference type="PANTHER" id="PTHR11538">
    <property type="entry name" value="PHENYLALANYL-TRNA SYNTHETASE"/>
    <property type="match status" value="1"/>
</dbReference>
<dbReference type="Pfam" id="PF02912">
    <property type="entry name" value="Phe_tRNA-synt_N"/>
    <property type="match status" value="1"/>
</dbReference>
<dbReference type="Pfam" id="PF01409">
    <property type="entry name" value="tRNA-synt_2d"/>
    <property type="match status" value="1"/>
</dbReference>
<dbReference type="SUPFAM" id="SSF55681">
    <property type="entry name" value="Class II aaRS and biotin synthetases"/>
    <property type="match status" value="1"/>
</dbReference>
<dbReference type="SUPFAM" id="SSF46589">
    <property type="entry name" value="tRNA-binding arm"/>
    <property type="match status" value="1"/>
</dbReference>
<dbReference type="PROSITE" id="PS50862">
    <property type="entry name" value="AA_TRNA_LIGASE_II"/>
    <property type="match status" value="1"/>
</dbReference>
<proteinExistence type="inferred from homology"/>
<accession>B1KRE3</accession>
<sequence>MSQLTEIVEQALAAIEGTDDLKALDEIRVDYLGKKGKITDMMKMMGKLSPAEKPAFGQAVNQAKQAVQKHLSERVEGLKAAELQATLAAESIDVTLPGRRIDNGGLHPVTRTIERIETFFGELGFSVKEGPEIEDDFHNFDALNISEHHPARADHDTFYFNPKVMLRTQTSGVQIRTMENEKPPLRIISPGRVYRNDYDQTHTPMFHQVEGLLVAENVNFAELKGILHDFLRNFFEEDLQVRFRPSYFPFTEPSAEVDVMGKNGKWLEVLGCGMVHPNVLRSVGIDPEKYSGFAFGMGVERLSMLRYGVNDLRSFFENDLRFLKQFK</sequence>
<keyword id="KW-0030">Aminoacyl-tRNA synthetase</keyword>
<keyword id="KW-0067">ATP-binding</keyword>
<keyword id="KW-0963">Cytoplasm</keyword>
<keyword id="KW-0436">Ligase</keyword>
<keyword id="KW-0460">Magnesium</keyword>
<keyword id="KW-0479">Metal-binding</keyword>
<keyword id="KW-0547">Nucleotide-binding</keyword>
<keyword id="KW-0648">Protein biosynthesis</keyword>
<keyword id="KW-1185">Reference proteome</keyword>
<name>SYFA_SHEWM</name>
<gene>
    <name evidence="1" type="primary">pheS</name>
    <name type="ordered locus">Swoo_2066</name>
</gene>
<organism>
    <name type="scientific">Shewanella woodyi (strain ATCC 51908 / MS32)</name>
    <dbReference type="NCBI Taxonomy" id="392500"/>
    <lineage>
        <taxon>Bacteria</taxon>
        <taxon>Pseudomonadati</taxon>
        <taxon>Pseudomonadota</taxon>
        <taxon>Gammaproteobacteria</taxon>
        <taxon>Alteromonadales</taxon>
        <taxon>Shewanellaceae</taxon>
        <taxon>Shewanella</taxon>
    </lineage>
</organism>
<evidence type="ECO:0000255" key="1">
    <source>
        <dbReference type="HAMAP-Rule" id="MF_00281"/>
    </source>
</evidence>
<protein>
    <recommendedName>
        <fullName evidence="1">Phenylalanine--tRNA ligase alpha subunit</fullName>
        <ecNumber evidence="1">6.1.1.20</ecNumber>
    </recommendedName>
    <alternativeName>
        <fullName evidence="1">Phenylalanyl-tRNA synthetase alpha subunit</fullName>
        <shortName evidence="1">PheRS</shortName>
    </alternativeName>
</protein>